<reference key="1">
    <citation type="submission" date="2007-02" db="EMBL/GenBank/DDBJ databases">
        <title>Complete sequence of chromosome of Yersinia pestis Pestoides F.</title>
        <authorList>
            <consortium name="US DOE Joint Genome Institute"/>
            <person name="Copeland A."/>
            <person name="Lucas S."/>
            <person name="Lapidus A."/>
            <person name="Barry K."/>
            <person name="Detter J.C."/>
            <person name="Glavina del Rio T."/>
            <person name="Hammon N."/>
            <person name="Israni S."/>
            <person name="Dalin E."/>
            <person name="Tice H."/>
            <person name="Pitluck S."/>
            <person name="Di Bartolo G."/>
            <person name="Chain P."/>
            <person name="Malfatti S."/>
            <person name="Shin M."/>
            <person name="Vergez L."/>
            <person name="Schmutz J."/>
            <person name="Larimer F."/>
            <person name="Land M."/>
            <person name="Hauser L."/>
            <person name="Worsham P."/>
            <person name="Chu M."/>
            <person name="Bearden S."/>
            <person name="Garcia E."/>
            <person name="Richardson P."/>
        </authorList>
    </citation>
    <scope>NUCLEOTIDE SEQUENCE [LARGE SCALE GENOMIC DNA]</scope>
    <source>
        <strain>Pestoides F</strain>
    </source>
</reference>
<organism>
    <name type="scientific">Yersinia pestis (strain Pestoides F)</name>
    <dbReference type="NCBI Taxonomy" id="386656"/>
    <lineage>
        <taxon>Bacteria</taxon>
        <taxon>Pseudomonadati</taxon>
        <taxon>Pseudomonadota</taxon>
        <taxon>Gammaproteobacteria</taxon>
        <taxon>Enterobacterales</taxon>
        <taxon>Yersiniaceae</taxon>
        <taxon>Yersinia</taxon>
    </lineage>
</organism>
<dbReference type="EMBL" id="CP000668">
    <property type="protein sequence ID" value="ABP38484.1"/>
    <property type="molecule type" value="Genomic_DNA"/>
</dbReference>
<dbReference type="RefSeq" id="WP_002208920.1">
    <property type="nucleotide sequence ID" value="NZ_CP009715.1"/>
</dbReference>
<dbReference type="SMR" id="A4TGS1"/>
<dbReference type="KEGG" id="ypp:YPDSF_0058"/>
<dbReference type="PATRIC" id="fig|386656.14.peg.512"/>
<dbReference type="GO" id="GO:0003677">
    <property type="term" value="F:DNA binding"/>
    <property type="evidence" value="ECO:0007669"/>
    <property type="project" value="UniProtKB-KW"/>
</dbReference>
<dbReference type="GO" id="GO:0005506">
    <property type="term" value="F:iron ion binding"/>
    <property type="evidence" value="ECO:0007669"/>
    <property type="project" value="UniProtKB-UniRule"/>
</dbReference>
<dbReference type="GO" id="GO:0051536">
    <property type="term" value="F:iron-sulfur cluster binding"/>
    <property type="evidence" value="ECO:0007669"/>
    <property type="project" value="UniProtKB-KW"/>
</dbReference>
<dbReference type="Gene3D" id="1.10.10.10">
    <property type="entry name" value="Winged helix-like DNA-binding domain superfamily/Winged helix DNA-binding domain"/>
    <property type="match status" value="1"/>
</dbReference>
<dbReference type="HAMAP" id="MF_01586">
    <property type="entry name" value="FeoC"/>
    <property type="match status" value="1"/>
</dbReference>
<dbReference type="InterPro" id="IPR023732">
    <property type="entry name" value="FeoC"/>
</dbReference>
<dbReference type="InterPro" id="IPR015102">
    <property type="entry name" value="Tscrpt_reg_HTH_FeoC"/>
</dbReference>
<dbReference type="InterPro" id="IPR036388">
    <property type="entry name" value="WH-like_DNA-bd_sf"/>
</dbReference>
<dbReference type="InterPro" id="IPR036390">
    <property type="entry name" value="WH_DNA-bd_sf"/>
</dbReference>
<dbReference type="Pfam" id="PF09012">
    <property type="entry name" value="FeoC"/>
    <property type="match status" value="1"/>
</dbReference>
<dbReference type="SUPFAM" id="SSF46785">
    <property type="entry name" value="Winged helix' DNA-binding domain"/>
    <property type="match status" value="1"/>
</dbReference>
<accession>A4TGS1</accession>
<evidence type="ECO:0000255" key="1">
    <source>
        <dbReference type="HAMAP-Rule" id="MF_01586"/>
    </source>
</evidence>
<comment type="function">
    <text evidence="1">May function as a transcriptional regulator that controls feoABC expression.</text>
</comment>
<comment type="similarity">
    <text evidence="1">Belongs to the FeoC family.</text>
</comment>
<gene>
    <name evidence="1" type="primary">feoC</name>
    <name type="ordered locus">YPDSF_0058</name>
</gene>
<name>FEOC_YERPP</name>
<sequence length="85" mass="9232">MASLLQLRDAIALNGSAEASQLSRQLAIPLPLVNAMLEKLTAMGKIERIELDHSGCLTGSCKSCPEGHQHCNTVIYQLKEPHAHQ</sequence>
<keyword id="KW-0238">DNA-binding</keyword>
<keyword id="KW-0408">Iron</keyword>
<keyword id="KW-0411">Iron-sulfur</keyword>
<keyword id="KW-0479">Metal-binding</keyword>
<keyword id="KW-0678">Repressor</keyword>
<keyword id="KW-0804">Transcription</keyword>
<keyword id="KW-0805">Transcription regulation</keyword>
<protein>
    <recommendedName>
        <fullName evidence="1">Probable [Fe-S]-dependent transcriptional repressor</fullName>
    </recommendedName>
</protein>
<proteinExistence type="inferred from homology"/>
<feature type="chain" id="PRO_0000313077" description="Probable [Fe-S]-dependent transcriptional repressor">
    <location>
        <begin position="1"/>
        <end position="85"/>
    </location>
</feature>
<feature type="binding site" evidence="1">
    <location>
        <position position="56"/>
    </location>
    <ligand>
        <name>iron-sulfur cluster</name>
        <dbReference type="ChEBI" id="CHEBI:30408"/>
    </ligand>
</feature>
<feature type="binding site" evidence="1">
    <location>
        <position position="61"/>
    </location>
    <ligand>
        <name>iron-sulfur cluster</name>
        <dbReference type="ChEBI" id="CHEBI:30408"/>
    </ligand>
</feature>
<feature type="binding site" evidence="1">
    <location>
        <position position="64"/>
    </location>
    <ligand>
        <name>iron-sulfur cluster</name>
        <dbReference type="ChEBI" id="CHEBI:30408"/>
    </ligand>
</feature>
<feature type="binding site" evidence="1">
    <location>
        <position position="71"/>
    </location>
    <ligand>
        <name>iron-sulfur cluster</name>
        <dbReference type="ChEBI" id="CHEBI:30408"/>
    </ligand>
</feature>